<proteinExistence type="inferred from homology"/>
<evidence type="ECO:0000255" key="1">
    <source>
        <dbReference type="HAMAP-Rule" id="MF_01368"/>
    </source>
</evidence>
<evidence type="ECO:0000305" key="2"/>
<accession>B7HQX2</accession>
<dbReference type="EMBL" id="CP001177">
    <property type="protein sequence ID" value="ACJ81722.1"/>
    <property type="molecule type" value="Genomic_DNA"/>
</dbReference>
<dbReference type="SMR" id="B7HQX2"/>
<dbReference type="KEGG" id="bcr:BCAH187_A0169"/>
<dbReference type="HOGENOM" id="CLU_074407_2_2_9"/>
<dbReference type="Proteomes" id="UP000002214">
    <property type="component" value="Chromosome"/>
</dbReference>
<dbReference type="GO" id="GO:0022625">
    <property type="term" value="C:cytosolic large ribosomal subunit"/>
    <property type="evidence" value="ECO:0007669"/>
    <property type="project" value="TreeGrafter"/>
</dbReference>
<dbReference type="GO" id="GO:0003735">
    <property type="term" value="F:structural constituent of ribosome"/>
    <property type="evidence" value="ECO:0007669"/>
    <property type="project" value="InterPro"/>
</dbReference>
<dbReference type="GO" id="GO:0006412">
    <property type="term" value="P:translation"/>
    <property type="evidence" value="ECO:0007669"/>
    <property type="project" value="UniProtKB-UniRule"/>
</dbReference>
<dbReference type="FunFam" id="3.90.1030.10:FF:000002">
    <property type="entry name" value="50S ribosomal protein L17"/>
    <property type="match status" value="1"/>
</dbReference>
<dbReference type="Gene3D" id="3.90.1030.10">
    <property type="entry name" value="Ribosomal protein L17"/>
    <property type="match status" value="1"/>
</dbReference>
<dbReference type="HAMAP" id="MF_01368">
    <property type="entry name" value="Ribosomal_bL17"/>
    <property type="match status" value="1"/>
</dbReference>
<dbReference type="InterPro" id="IPR000456">
    <property type="entry name" value="Ribosomal_bL17"/>
</dbReference>
<dbReference type="InterPro" id="IPR047859">
    <property type="entry name" value="Ribosomal_bL17_CS"/>
</dbReference>
<dbReference type="InterPro" id="IPR036373">
    <property type="entry name" value="Ribosomal_bL17_sf"/>
</dbReference>
<dbReference type="NCBIfam" id="TIGR00059">
    <property type="entry name" value="L17"/>
    <property type="match status" value="1"/>
</dbReference>
<dbReference type="PANTHER" id="PTHR14413:SF16">
    <property type="entry name" value="LARGE RIBOSOMAL SUBUNIT PROTEIN BL17M"/>
    <property type="match status" value="1"/>
</dbReference>
<dbReference type="PANTHER" id="PTHR14413">
    <property type="entry name" value="RIBOSOMAL PROTEIN L17"/>
    <property type="match status" value="1"/>
</dbReference>
<dbReference type="Pfam" id="PF01196">
    <property type="entry name" value="Ribosomal_L17"/>
    <property type="match status" value="1"/>
</dbReference>
<dbReference type="SUPFAM" id="SSF64263">
    <property type="entry name" value="Prokaryotic ribosomal protein L17"/>
    <property type="match status" value="1"/>
</dbReference>
<dbReference type="PROSITE" id="PS01167">
    <property type="entry name" value="RIBOSOMAL_L17"/>
    <property type="match status" value="1"/>
</dbReference>
<protein>
    <recommendedName>
        <fullName evidence="1">Large ribosomal subunit protein bL17</fullName>
    </recommendedName>
    <alternativeName>
        <fullName evidence="2">50S ribosomal protein L17</fullName>
    </alternativeName>
</protein>
<keyword id="KW-0687">Ribonucleoprotein</keyword>
<keyword id="KW-0689">Ribosomal protein</keyword>
<feature type="chain" id="PRO_1000144377" description="Large ribosomal subunit protein bL17">
    <location>
        <begin position="1"/>
        <end position="120"/>
    </location>
</feature>
<comment type="subunit">
    <text evidence="1">Part of the 50S ribosomal subunit. Contacts protein L32.</text>
</comment>
<comment type="similarity">
    <text evidence="1">Belongs to the bacterial ribosomal protein bL17 family.</text>
</comment>
<name>RL17_BACC7</name>
<organism>
    <name type="scientific">Bacillus cereus (strain AH187)</name>
    <dbReference type="NCBI Taxonomy" id="405534"/>
    <lineage>
        <taxon>Bacteria</taxon>
        <taxon>Bacillati</taxon>
        <taxon>Bacillota</taxon>
        <taxon>Bacilli</taxon>
        <taxon>Bacillales</taxon>
        <taxon>Bacillaceae</taxon>
        <taxon>Bacillus</taxon>
        <taxon>Bacillus cereus group</taxon>
    </lineage>
</organism>
<reference key="1">
    <citation type="submission" date="2008-10" db="EMBL/GenBank/DDBJ databases">
        <title>Genome sequence of Bacillus cereus AH187.</title>
        <authorList>
            <person name="Dodson R.J."/>
            <person name="Durkin A.S."/>
            <person name="Rosovitz M.J."/>
            <person name="Rasko D.A."/>
            <person name="Kolsto A.B."/>
            <person name="Okstad O.A."/>
            <person name="Ravel J."/>
            <person name="Sutton G."/>
        </authorList>
    </citation>
    <scope>NUCLEOTIDE SEQUENCE [LARGE SCALE GENOMIC DNA]</scope>
    <source>
        <strain>AH187</strain>
    </source>
</reference>
<gene>
    <name evidence="1" type="primary">rplQ</name>
    <name type="ordered locus">BCAH187_A0169</name>
</gene>
<sequence>MAYRKLGRTSAQRKAMLRDLATDLIINERIQTTETRAKELRSVVEKMITLGKRGDLHARRQAAAFIRNEVANAETGQDALQKLFADVAPRYAERQGGYTRIAKIGPRRGDAAPMVIIELV</sequence>